<protein>
    <recommendedName>
        <fullName>Glutaredoxin 1</fullName>
        <shortName>Grx1</shortName>
    </recommendedName>
</protein>
<evidence type="ECO:0000250" key="1"/>
<evidence type="ECO:0000255" key="2">
    <source>
        <dbReference type="PROSITE-ProRule" id="PRU00686"/>
    </source>
</evidence>
<evidence type="ECO:0000305" key="3"/>
<comment type="function">
    <text evidence="1">The disulfide bond functions as an electron carrier in the glutathione-dependent synthesis of deoxyribonucleotides by the enzyme ribonucleotide reductase. In addition, it is also involved in reducing some disulfides in a coupled system with glutathione reductase (By similarity).</text>
</comment>
<comment type="subunit">
    <text evidence="1">Monomer.</text>
</comment>
<comment type="similarity">
    <text evidence="3">Belongs to the glutaredoxin family.</text>
</comment>
<reference key="1">
    <citation type="journal article" date="2002" name="Nucleic Acids Res.">
        <title>Genome sequence of Shigella flexneri 2a: insights into pathogenicity through comparison with genomes of Escherichia coli K12 and O157.</title>
        <authorList>
            <person name="Jin Q."/>
            <person name="Yuan Z."/>
            <person name="Xu J."/>
            <person name="Wang Y."/>
            <person name="Shen Y."/>
            <person name="Lu W."/>
            <person name="Wang J."/>
            <person name="Liu H."/>
            <person name="Yang J."/>
            <person name="Yang F."/>
            <person name="Zhang X."/>
            <person name="Zhang J."/>
            <person name="Yang G."/>
            <person name="Wu H."/>
            <person name="Qu D."/>
            <person name="Dong J."/>
            <person name="Sun L."/>
            <person name="Xue Y."/>
            <person name="Zhao A."/>
            <person name="Gao Y."/>
            <person name="Zhu J."/>
            <person name="Kan B."/>
            <person name="Ding K."/>
            <person name="Chen S."/>
            <person name="Cheng H."/>
            <person name="Yao Z."/>
            <person name="He B."/>
            <person name="Chen R."/>
            <person name="Ma D."/>
            <person name="Qiang B."/>
            <person name="Wen Y."/>
            <person name="Hou Y."/>
            <person name="Yu J."/>
        </authorList>
    </citation>
    <scope>NUCLEOTIDE SEQUENCE [LARGE SCALE GENOMIC DNA]</scope>
    <source>
        <strain>301 / Serotype 2a</strain>
    </source>
</reference>
<reference key="2">
    <citation type="journal article" date="2003" name="Infect. Immun.">
        <title>Complete genome sequence and comparative genomics of Shigella flexneri serotype 2a strain 2457T.</title>
        <authorList>
            <person name="Wei J."/>
            <person name="Goldberg M.B."/>
            <person name="Burland V."/>
            <person name="Venkatesan M.M."/>
            <person name="Deng W."/>
            <person name="Fournier G."/>
            <person name="Mayhew G.F."/>
            <person name="Plunkett G. III"/>
            <person name="Rose D.J."/>
            <person name="Darling A."/>
            <person name="Mau B."/>
            <person name="Perna N.T."/>
            <person name="Payne S.M."/>
            <person name="Runyen-Janecky L.J."/>
            <person name="Zhou S."/>
            <person name="Schwartz D.C."/>
            <person name="Blattner F.R."/>
        </authorList>
    </citation>
    <scope>NUCLEOTIDE SEQUENCE [LARGE SCALE GENOMIC DNA]</scope>
    <source>
        <strain>ATCC 700930 / 2457T / Serotype 2a</strain>
    </source>
</reference>
<sequence length="85" mass="9685">MQTVIFGRSGCPYCVRAKDLAEKLSNERDDFQYQYVDIRAEGITKEDLQQKAGKPVETVPQIFVDQQHIGGYTDFAAWVKENLDA</sequence>
<keyword id="KW-0215">Deoxyribonucleotide synthesis</keyword>
<keyword id="KW-1015">Disulfide bond</keyword>
<keyword id="KW-0249">Electron transport</keyword>
<keyword id="KW-0676">Redox-active center</keyword>
<keyword id="KW-1185">Reference proteome</keyword>
<keyword id="KW-0813">Transport</keyword>
<name>GLRX1_SHIFL</name>
<accession>P68689</accession>
<accession>P00277</accession>
<organism>
    <name type="scientific">Shigella flexneri</name>
    <dbReference type="NCBI Taxonomy" id="623"/>
    <lineage>
        <taxon>Bacteria</taxon>
        <taxon>Pseudomonadati</taxon>
        <taxon>Pseudomonadota</taxon>
        <taxon>Gammaproteobacteria</taxon>
        <taxon>Enterobacterales</taxon>
        <taxon>Enterobacteriaceae</taxon>
        <taxon>Shigella</taxon>
    </lineage>
</organism>
<proteinExistence type="inferred from homology"/>
<dbReference type="EMBL" id="AE005674">
    <property type="protein sequence ID" value="AAN42435.2"/>
    <property type="molecule type" value="Genomic_DNA"/>
</dbReference>
<dbReference type="EMBL" id="AE014073">
    <property type="protein sequence ID" value="AAP16308.1"/>
    <property type="molecule type" value="Genomic_DNA"/>
</dbReference>
<dbReference type="RefSeq" id="NP_706728.2">
    <property type="nucleotide sequence ID" value="NC_004337.2"/>
</dbReference>
<dbReference type="RefSeq" id="WP_001195240.1">
    <property type="nucleotide sequence ID" value="NZ_WPGW01000056.1"/>
</dbReference>
<dbReference type="BMRB" id="P68689"/>
<dbReference type="SMR" id="P68689"/>
<dbReference type="STRING" id="198214.SF0802"/>
<dbReference type="PaxDb" id="198214-SF0802"/>
<dbReference type="GeneID" id="1023787"/>
<dbReference type="GeneID" id="93776573"/>
<dbReference type="KEGG" id="sfl:SF0802"/>
<dbReference type="KEGG" id="sfx:S0845"/>
<dbReference type="PATRIC" id="fig|198214.7.peg.930"/>
<dbReference type="HOGENOM" id="CLU_026126_7_3_6"/>
<dbReference type="Proteomes" id="UP000001006">
    <property type="component" value="Chromosome"/>
</dbReference>
<dbReference type="Proteomes" id="UP000002673">
    <property type="component" value="Chromosome"/>
</dbReference>
<dbReference type="GO" id="GO:0005737">
    <property type="term" value="C:cytoplasm"/>
    <property type="evidence" value="ECO:0007669"/>
    <property type="project" value="TreeGrafter"/>
</dbReference>
<dbReference type="GO" id="GO:0009055">
    <property type="term" value="F:electron transfer activity"/>
    <property type="evidence" value="ECO:0007669"/>
    <property type="project" value="InterPro"/>
</dbReference>
<dbReference type="GO" id="GO:0015038">
    <property type="term" value="F:glutathione disulfide oxidoreductase activity"/>
    <property type="evidence" value="ECO:0007669"/>
    <property type="project" value="TreeGrafter"/>
</dbReference>
<dbReference type="GO" id="GO:0015035">
    <property type="term" value="F:protein-disulfide reductase activity"/>
    <property type="evidence" value="ECO:0007669"/>
    <property type="project" value="InterPro"/>
</dbReference>
<dbReference type="GO" id="GO:0045454">
    <property type="term" value="P:cell redox homeostasis"/>
    <property type="evidence" value="ECO:0007669"/>
    <property type="project" value="InterPro"/>
</dbReference>
<dbReference type="GO" id="GO:0034599">
    <property type="term" value="P:cellular response to oxidative stress"/>
    <property type="evidence" value="ECO:0007669"/>
    <property type="project" value="TreeGrafter"/>
</dbReference>
<dbReference type="GO" id="GO:0009263">
    <property type="term" value="P:deoxyribonucleotide biosynthetic process"/>
    <property type="evidence" value="ECO:0007669"/>
    <property type="project" value="UniProtKB-KW"/>
</dbReference>
<dbReference type="CDD" id="cd02066">
    <property type="entry name" value="GRX_family"/>
    <property type="match status" value="1"/>
</dbReference>
<dbReference type="Gene3D" id="3.40.30.10">
    <property type="entry name" value="Glutaredoxin"/>
    <property type="match status" value="1"/>
</dbReference>
<dbReference type="InterPro" id="IPR011767">
    <property type="entry name" value="GLR_AS"/>
</dbReference>
<dbReference type="InterPro" id="IPR002109">
    <property type="entry name" value="Glutaredoxin"/>
</dbReference>
<dbReference type="InterPro" id="IPR014025">
    <property type="entry name" value="Glutaredoxin_subgr"/>
</dbReference>
<dbReference type="InterPro" id="IPR011902">
    <property type="entry name" value="GRXA"/>
</dbReference>
<dbReference type="InterPro" id="IPR036249">
    <property type="entry name" value="Thioredoxin-like_sf"/>
</dbReference>
<dbReference type="NCBIfam" id="TIGR02183">
    <property type="entry name" value="GRXA"/>
    <property type="match status" value="1"/>
</dbReference>
<dbReference type="NCBIfam" id="NF008401">
    <property type="entry name" value="PRK11200.1"/>
    <property type="match status" value="1"/>
</dbReference>
<dbReference type="PANTHER" id="PTHR45694:SF28">
    <property type="entry name" value="GLUTAREDOXIN 1"/>
    <property type="match status" value="1"/>
</dbReference>
<dbReference type="PANTHER" id="PTHR45694">
    <property type="entry name" value="GLUTAREDOXIN 2"/>
    <property type="match status" value="1"/>
</dbReference>
<dbReference type="Pfam" id="PF00462">
    <property type="entry name" value="Glutaredoxin"/>
    <property type="match status" value="1"/>
</dbReference>
<dbReference type="PRINTS" id="PR00160">
    <property type="entry name" value="GLUTAREDOXIN"/>
</dbReference>
<dbReference type="SUPFAM" id="SSF52833">
    <property type="entry name" value="Thioredoxin-like"/>
    <property type="match status" value="1"/>
</dbReference>
<dbReference type="PROSITE" id="PS00195">
    <property type="entry name" value="GLUTAREDOXIN_1"/>
    <property type="match status" value="1"/>
</dbReference>
<dbReference type="PROSITE" id="PS51354">
    <property type="entry name" value="GLUTAREDOXIN_2"/>
    <property type="match status" value="1"/>
</dbReference>
<gene>
    <name type="primary">grxA</name>
    <name type="synonym">grx</name>
    <name type="ordered locus">SF0802</name>
    <name type="ordered locus">S0845</name>
</gene>
<feature type="chain" id="PRO_0000141584" description="Glutaredoxin 1">
    <location>
        <begin position="1"/>
        <end position="85"/>
    </location>
</feature>
<feature type="domain" description="Glutaredoxin" evidence="2">
    <location>
        <begin position="1"/>
        <end position="85"/>
    </location>
</feature>
<feature type="disulfide bond" description="Redox-active" evidence="1">
    <location>
        <begin position="11"/>
        <end position="14"/>
    </location>
</feature>